<keyword id="KW-0156">Chromatin regulator</keyword>
<keyword id="KW-0158">Chromosome</keyword>
<keyword id="KW-0217">Developmental protein</keyword>
<keyword id="KW-0479">Metal-binding</keyword>
<keyword id="KW-0489">Methyltransferase</keyword>
<keyword id="KW-0539">Nucleus</keyword>
<keyword id="KW-1185">Reference proteome</keyword>
<keyword id="KW-0677">Repeat</keyword>
<keyword id="KW-0949">S-adenosyl-L-methionine</keyword>
<keyword id="KW-0808">Transferase</keyword>
<keyword id="KW-0862">Zinc</keyword>
<keyword id="KW-0863">Zinc-finger</keyword>
<feature type="chain" id="PRO_0000186083" description="Histone-lysine N-methyltransferase mes-4">
    <location>
        <begin position="1"/>
        <end position="898"/>
    </location>
</feature>
<feature type="domain" description="SET" evidence="2">
    <location>
        <begin position="537"/>
        <end position="665"/>
    </location>
</feature>
<feature type="domain" description="Post-SET" evidence="1">
    <location>
        <begin position="671"/>
        <end position="687"/>
    </location>
</feature>
<feature type="zinc finger region" description="PHD-type 1">
    <location>
        <begin position="126"/>
        <end position="214"/>
    </location>
</feature>
<feature type="zinc finger region" description="PHD-type 2">
    <location>
        <begin position="303"/>
        <end position="355"/>
    </location>
</feature>
<feature type="region of interest" description="Disordered" evidence="3">
    <location>
        <begin position="1"/>
        <end position="68"/>
    </location>
</feature>
<feature type="region of interest" description="Disordered" evidence="3">
    <location>
        <begin position="689"/>
        <end position="847"/>
    </location>
</feature>
<feature type="compositionally biased region" description="Polar residues" evidence="3">
    <location>
        <begin position="36"/>
        <end position="51"/>
    </location>
</feature>
<feature type="compositionally biased region" description="Basic and acidic residues" evidence="3">
    <location>
        <begin position="692"/>
        <end position="704"/>
    </location>
</feature>
<feature type="compositionally biased region" description="Basic residues" evidence="3">
    <location>
        <begin position="705"/>
        <end position="719"/>
    </location>
</feature>
<feature type="compositionally biased region" description="Low complexity" evidence="3">
    <location>
        <begin position="737"/>
        <end position="751"/>
    </location>
</feature>
<feature type="compositionally biased region" description="Low complexity" evidence="3">
    <location>
        <begin position="761"/>
        <end position="773"/>
    </location>
</feature>
<feature type="compositionally biased region" description="Polar residues" evidence="3">
    <location>
        <begin position="774"/>
        <end position="788"/>
    </location>
</feature>
<feature type="compositionally biased region" description="Low complexity" evidence="3">
    <location>
        <begin position="802"/>
        <end position="811"/>
    </location>
</feature>
<feature type="mutagenesis site" description="In bn67; suppresses the multivulval phenotype of the lin-15A/B n765 mutant." evidence="6">
    <original>H</original>
    <variation>Y</variation>
    <location>
        <position position="206"/>
    </location>
</feature>
<feature type="mutagenesis site" description="In BN87; maternal-effect mutation. Progeny defects in gonad proliferation. Germ cell degeneration. Abolishes histone methyltransferase activity." evidence="4 7">
    <location>
        <begin position="877"/>
        <end position="898"/>
    </location>
</feature>
<sequence>MLPSSGDSSKENCAPQDGIVEKEGPNKPFKKKNVKQRNATPQGAGSETSSNAEDKQEEAPILTNAPKDIISMQIQETKAFLSEYEEFVDTDYPKTTFTHVPRKFLSVSPFTPIEADAEGEFLPDADSKCVICHEEKDKTGKSDLITCHGYINGEMDDGKRLLGNIPMFPCRSKFHASCMINYNSGGFHFQYAARLECQARLLCPLHCCNSCNLDHHKQSAYVGDIAECALCLRAFHLTSCYPSGGRDLNVSITIGGKVEKFEMIICPAHYLPGADVQFYNKHKKRKNAVTVVPKADVTMKSHIKACCVIGCEKSSNSKTIMCKTCCRSFHSGCREVETLNGKPIPDDQCESCVCGDPIPQNTLILAKWTDNSFWLALTLDWYKYPTGNRGNINFERLGYTVVQWLIPQENDKEKQPLMSIVPVSDIARLTKNYFSLAKNSTLRNLWEEKYEEQADTALKRCPYVCKTVFGRLRTSVYYKCEPKLEEYHNNEVCNCEGADRCTKLSCQYLADDYECPPSCSKKGVCHNRQVSMGIVSEKIKLAATLCKGYGVFAKGQIEKDEYICEYVGEIIDKAEKKRRLDSVSISRDFQANHYMMELHKGLTVDAARYGNISRYINHSCDPNAASFVTKVFVKKTKEGSLYDTRSYIRAIRTIDDGDEITFSYNMNNEENLPDCECGAENCMGTMGKAKREKPEVADSSEKAAKKNKSSKKKSVKNQNRKSQEAGKNGTASKKSEISPSKPSTSSASSTSFVQQASWPISQNKKNLKKNSNQPVADTGSTLSTSTELNFHEKPQELLSPVSSRSRAASSSTPRAQKSKSRRDDVESEAPPVKRATPSLQTIQETGKAIEFPATKSAITKARALSTQSVPSPHTVEVKVRAISTRGRVQKETKRFEPI</sequence>
<name>MES4_CAEEL</name>
<comment type="function">
    <text evidence="4 5 6 7 8">Histone methyltransferase. Dimethylates 'Lys-36' of histone H3, a specific tag for epigenetic transcriptional activation. Plays a central role in early development and is responsible for all H3 'Lys-36' dimethylation until about the 40-cell stage. Indirectly involved in the global inactivation of the X chromosomes in germline cells, possibly by excluding the mes-2-mes-3-mes-6 repressive Polycomb complex from the autosomes (PubMed:12077420, PubMed:16968818). Not related to transcription elongation (PubMed:12077420, PubMed:16968818). Required for small-RNA-induced H3K27 trimethylation (PubMed:26365259). May suppress sensitivity to RNAi (PubMed:16507136). May regulate the expression of genes required for vulval development (PubMed:16507136, PubMed:16710447).</text>
</comment>
<comment type="catalytic activity">
    <reaction evidence="7">
        <text>L-lysyl(36)-[histone H3] + 2 S-adenosyl-L-methionine = N(6),N(6)-dimethyl-L-lysyl(36)-[histone H3] + 2 S-adenosyl-L-homocysteine + 2 H(+)</text>
        <dbReference type="Rhea" id="RHEA:60308"/>
        <dbReference type="Rhea" id="RHEA-COMP:9785"/>
        <dbReference type="Rhea" id="RHEA-COMP:9787"/>
        <dbReference type="ChEBI" id="CHEBI:15378"/>
        <dbReference type="ChEBI" id="CHEBI:29969"/>
        <dbReference type="ChEBI" id="CHEBI:57856"/>
        <dbReference type="ChEBI" id="CHEBI:59789"/>
        <dbReference type="ChEBI" id="CHEBI:61976"/>
        <dbReference type="EC" id="2.1.1.357"/>
    </reaction>
</comment>
<comment type="subcellular location">
    <subcellularLocation>
        <location evidence="7">Nucleus</location>
    </subcellularLocation>
    <subcellularLocation>
        <location evidence="7">Chromosome</location>
    </subcellularLocation>
    <text>Specifically associated with the autosomes and with the distal tip of chromosome X. Colocalizes with methylated 'Lys-4' of histone H3.</text>
</comment>
<comment type="tissue specificity">
    <text>In adults, it is predominantly expressed in the germline, and weakly expressed in intestinal cells.</text>
</comment>
<comment type="developmental stage">
    <text evidence="4">Expressed both maternally and zygotically. Expressed in all cells of early embryos. In late embryos and L1 larva, it is weakly expressed in somatic cells, while it is expressed at intermediate levels in the primordial germ cells Z2 and Z3.</text>
</comment>
<comment type="disruption phenotype">
    <text evidence="4 5 6 7">Derepression of X-linked genes in the germline. RNAi-mediated knockdown results in sterility (PubMed:16710447). RNAi-mediated knockdown suppresses the multivulval phenotype of the lin-15A/B n765 mutant (PubMed:16507136, PubMed:16710447). RNAi-mediated knockdown at 25 degrees Celsius rescues the larval lethality phenotype of the mep-1 (q660) single mutants (PubMed:16710447).</text>
</comment>
<comment type="similarity">
    <text evidence="2">Belongs to the class V-like SAM-binding methyltransferase superfamily. Histone-lysine methyltransferase family. SET2 subfamily.</text>
</comment>
<gene>
    <name evidence="9" type="primary">mes-4</name>
    <name evidence="9" type="ORF">Y2H9A.1</name>
</gene>
<dbReference type="EC" id="2.1.1.357" evidence="7"/>
<dbReference type="EMBL" id="AF233290">
    <property type="protein sequence ID" value="AAF62516.1"/>
    <property type="molecule type" value="mRNA"/>
</dbReference>
<dbReference type="EMBL" id="BX284605">
    <property type="protein sequence ID" value="CAA16276.2"/>
    <property type="molecule type" value="Genomic_DNA"/>
</dbReference>
<dbReference type="PIR" id="T26577">
    <property type="entry name" value="T26577"/>
</dbReference>
<dbReference type="RefSeq" id="NP_506333.1">
    <property type="nucleotide sequence ID" value="NM_073932.7"/>
</dbReference>
<dbReference type="BioGRID" id="44841">
    <property type="interactions" value="18"/>
</dbReference>
<dbReference type="FunCoup" id="Q9NH52">
    <property type="interactions" value="69"/>
</dbReference>
<dbReference type="IntAct" id="Q9NH52">
    <property type="interactions" value="3"/>
</dbReference>
<dbReference type="STRING" id="6239.Y2H9A.1.1"/>
<dbReference type="PaxDb" id="6239-Y2H9A.1"/>
<dbReference type="PeptideAtlas" id="Q9NH52"/>
<dbReference type="EnsemblMetazoa" id="Y2H9A.1.1">
    <property type="protein sequence ID" value="Y2H9A.1.1"/>
    <property type="gene ID" value="WBGene00003222"/>
</dbReference>
<dbReference type="GeneID" id="179824"/>
<dbReference type="KEGG" id="cel:CELE_Y2H9A.1"/>
<dbReference type="UCSC" id="Y2H9A.1">
    <property type="organism name" value="c. elegans"/>
</dbReference>
<dbReference type="AGR" id="WB:WBGene00003222"/>
<dbReference type="CTD" id="179824"/>
<dbReference type="WormBase" id="Y2H9A.1">
    <property type="protein sequence ID" value="CE27781"/>
    <property type="gene ID" value="WBGene00003222"/>
    <property type="gene designation" value="mes-4"/>
</dbReference>
<dbReference type="eggNOG" id="KOG1081">
    <property type="taxonomic scope" value="Eukaryota"/>
</dbReference>
<dbReference type="HOGENOM" id="CLU_015168_0_0_1"/>
<dbReference type="InParanoid" id="Q9NH52"/>
<dbReference type="OMA" id="CYPAGAR"/>
<dbReference type="OrthoDB" id="422362at2759"/>
<dbReference type="PhylomeDB" id="Q9NH52"/>
<dbReference type="PRO" id="PR:Q9NH52"/>
<dbReference type="Proteomes" id="UP000001940">
    <property type="component" value="Chromosome V"/>
</dbReference>
<dbReference type="Bgee" id="WBGene00003222">
    <property type="expression patterns" value="Expressed in germ line (C elegans) and 5 other cell types or tissues"/>
</dbReference>
<dbReference type="GO" id="GO:0030849">
    <property type="term" value="C:autosome"/>
    <property type="evidence" value="ECO:0000314"/>
    <property type="project" value="WormBase"/>
</dbReference>
<dbReference type="GO" id="GO:0000785">
    <property type="term" value="C:chromatin"/>
    <property type="evidence" value="ECO:0000315"/>
    <property type="project" value="UniProtKB"/>
</dbReference>
<dbReference type="GO" id="GO:0005694">
    <property type="term" value="C:chromosome"/>
    <property type="evidence" value="ECO:0000314"/>
    <property type="project" value="WormBase"/>
</dbReference>
<dbReference type="GO" id="GO:0000228">
    <property type="term" value="C:nuclear chromosome"/>
    <property type="evidence" value="ECO:0000314"/>
    <property type="project" value="GO_Central"/>
</dbReference>
<dbReference type="GO" id="GO:0005634">
    <property type="term" value="C:nucleus"/>
    <property type="evidence" value="ECO:0000318"/>
    <property type="project" value="GO_Central"/>
</dbReference>
<dbReference type="GO" id="GO:0000805">
    <property type="term" value="C:X chromosome"/>
    <property type="evidence" value="ECO:0000314"/>
    <property type="project" value="WormBase"/>
</dbReference>
<dbReference type="GO" id="GO:0140954">
    <property type="term" value="F:histone H3K36 dimethyltransferase activity"/>
    <property type="evidence" value="ECO:0007669"/>
    <property type="project" value="UniProtKB-EC"/>
</dbReference>
<dbReference type="GO" id="GO:0046975">
    <property type="term" value="F:histone H3K36 methyltransferase activity"/>
    <property type="evidence" value="ECO:0000314"/>
    <property type="project" value="WormBase"/>
</dbReference>
<dbReference type="GO" id="GO:0042054">
    <property type="term" value="F:histone methyltransferase activity"/>
    <property type="evidence" value="ECO:0000303"/>
    <property type="project" value="UniProtKB"/>
</dbReference>
<dbReference type="GO" id="GO:0008270">
    <property type="term" value="F:zinc ion binding"/>
    <property type="evidence" value="ECO:0007669"/>
    <property type="project" value="UniProtKB-KW"/>
</dbReference>
<dbReference type="GO" id="GO:0042464">
    <property type="term" value="P:dosage compensation by hypoactivation of X chromosome"/>
    <property type="evidence" value="ECO:0000315"/>
    <property type="project" value="GO_Central"/>
</dbReference>
<dbReference type="GO" id="GO:0040029">
    <property type="term" value="P:epigenetic regulation of gene expression"/>
    <property type="evidence" value="ECO:0000315"/>
    <property type="project" value="WormBase"/>
</dbReference>
<dbReference type="GO" id="GO:0018992">
    <property type="term" value="P:germ-line sex determination"/>
    <property type="evidence" value="ECO:0000315"/>
    <property type="project" value="UniProtKB"/>
</dbReference>
<dbReference type="GO" id="GO:0031507">
    <property type="term" value="P:heterochromatin formation"/>
    <property type="evidence" value="ECO:0000315"/>
    <property type="project" value="UniProtKB"/>
</dbReference>
<dbReference type="GO" id="GO:0032259">
    <property type="term" value="P:methylation"/>
    <property type="evidence" value="ECO:0007669"/>
    <property type="project" value="UniProtKB-KW"/>
</dbReference>
<dbReference type="GO" id="GO:0006355">
    <property type="term" value="P:regulation of DNA-templated transcription"/>
    <property type="evidence" value="ECO:0000318"/>
    <property type="project" value="GO_Central"/>
</dbReference>
<dbReference type="CDD" id="cd10531">
    <property type="entry name" value="SET_SETD2-like"/>
    <property type="match status" value="1"/>
</dbReference>
<dbReference type="FunFam" id="2.170.270.10:FF:000106">
    <property type="entry name" value="Histone-lysine N-methyltransferase"/>
    <property type="match status" value="1"/>
</dbReference>
<dbReference type="Gene3D" id="2.170.270.10">
    <property type="entry name" value="SET domain"/>
    <property type="match status" value="1"/>
</dbReference>
<dbReference type="InterPro" id="IPR003616">
    <property type="entry name" value="Post-SET_dom"/>
</dbReference>
<dbReference type="InterPro" id="IPR050777">
    <property type="entry name" value="SET2_Histone-Lys_MeTrsfase"/>
</dbReference>
<dbReference type="InterPro" id="IPR001214">
    <property type="entry name" value="SET_dom"/>
</dbReference>
<dbReference type="InterPro" id="IPR046341">
    <property type="entry name" value="SET_dom_sf"/>
</dbReference>
<dbReference type="PANTHER" id="PTHR22884">
    <property type="entry name" value="SET DOMAIN PROTEINS"/>
    <property type="match status" value="1"/>
</dbReference>
<dbReference type="Pfam" id="PF00856">
    <property type="entry name" value="SET"/>
    <property type="match status" value="1"/>
</dbReference>
<dbReference type="SMART" id="SM00508">
    <property type="entry name" value="PostSET"/>
    <property type="match status" value="1"/>
</dbReference>
<dbReference type="SMART" id="SM00317">
    <property type="entry name" value="SET"/>
    <property type="match status" value="1"/>
</dbReference>
<dbReference type="SUPFAM" id="SSF82199">
    <property type="entry name" value="SET domain"/>
    <property type="match status" value="1"/>
</dbReference>
<dbReference type="PROSITE" id="PS50868">
    <property type="entry name" value="POST_SET"/>
    <property type="match status" value="1"/>
</dbReference>
<dbReference type="PROSITE" id="PS50280">
    <property type="entry name" value="SET"/>
    <property type="match status" value="1"/>
</dbReference>
<proteinExistence type="evidence at protein level"/>
<reference key="1">
    <citation type="journal article" date="2002" name="Science">
        <title>Regulation of the different chromatin states of autosomes and X chromosomes in the germ line of C. elegans.</title>
        <authorList>
            <person name="Fong Y."/>
            <person name="Bender L."/>
            <person name="Wang W."/>
            <person name="Strome S."/>
        </authorList>
    </citation>
    <scope>NUCLEOTIDE SEQUENCE [MRNA]</scope>
    <scope>CHARACTERIZATION</scope>
    <scope>DEVELOPMENTAL STAGE</scope>
    <scope>FUNCTION</scope>
    <scope>MUTAGENESIS OF 877-VAL--ILE-898</scope>
    <scope>DISRUPTION PHENOTYPE</scope>
</reference>
<reference key="2">
    <citation type="journal article" date="1998" name="Science">
        <title>Genome sequence of the nematode C. elegans: a platform for investigating biology.</title>
        <authorList>
            <consortium name="The C. elegans sequencing consortium"/>
        </authorList>
    </citation>
    <scope>NUCLEOTIDE SEQUENCE [LARGE SCALE GENOMIC DNA]</scope>
    <source>
        <strain>Bristol N2</strain>
    </source>
</reference>
<reference key="3">
    <citation type="journal article" date="2006" name="Development">
        <title>MES-4: an autosome-associated histone methyltransferase that participates in silencing the X chromosomes in the C. elegans germ line.</title>
        <authorList>
            <person name="Bender L.B."/>
            <person name="Suh J."/>
            <person name="Carroll C.R."/>
            <person name="Fong Y."/>
            <person name="Fingerman I.M."/>
            <person name="Briggs S.D."/>
            <person name="Cao R."/>
            <person name="Zhang Y."/>
            <person name="Reinke V."/>
            <person name="Strome S."/>
        </authorList>
    </citation>
    <scope>FUNCTION</scope>
    <scope>CATALYTIC ACTIVITY</scope>
    <scope>SUBCELLULAR LOCATION</scope>
    <scope>MUTAGENESIS OF 877-VAL--ILE-898</scope>
    <scope>DISRUPTION PHENOTYPE</scope>
</reference>
<reference key="4">
    <citation type="journal article" date="2006" name="Genome Biol.">
        <title>Loss of LIN-35, the Caenorhabditis elegans ortholog of the tumor suppressor p105Rb, results in enhanced RNA interference.</title>
        <authorList>
            <person name="Lehner B."/>
            <person name="Calixto A."/>
            <person name="Crombie C."/>
            <person name="Tischler J."/>
            <person name="Fortunato A."/>
            <person name="Chalfie M."/>
            <person name="Fraser A.G."/>
        </authorList>
    </citation>
    <scope>FUNCTION</scope>
    <scope>DISRUPTION PHENOTYPE</scope>
</reference>
<reference key="5">
    <citation type="journal article" date="2006" name="PLoS Genet.">
        <title>Diverse chromatin remodeling genes antagonize the Rb-involved SynMuv pathways in C. elegans.</title>
        <authorList>
            <person name="Cui M."/>
            <person name="Kim E.B."/>
            <person name="Han M."/>
        </authorList>
    </citation>
    <scope>FUNCTION</scope>
    <scope>DISRUPTION PHENOTYPE</scope>
    <scope>MUTAGENESIS OF HIS-206</scope>
</reference>
<reference key="6">
    <citation type="journal article" date="2015" name="Curr. Biol.">
        <title>The Nrde pathway mediates small-RNA-directed histone H3 lysine 27 trimethylation in Caenorhabditis elegans.</title>
        <authorList>
            <person name="Mao H."/>
            <person name="Zhu C."/>
            <person name="Zong D."/>
            <person name="Weng C."/>
            <person name="Yang X."/>
            <person name="Huang H."/>
            <person name="Liu D."/>
            <person name="Feng X."/>
            <person name="Guang S."/>
        </authorList>
    </citation>
    <scope>FUNCTION</scope>
</reference>
<protein>
    <recommendedName>
        <fullName>Histone-lysine N-methyltransferase mes-4</fullName>
        <ecNumber evidence="7">2.1.1.357</ecNumber>
    </recommendedName>
    <alternativeName>
        <fullName>Maternal-effect sterile protein 4</fullName>
    </alternativeName>
</protein>
<organism>
    <name type="scientific">Caenorhabditis elegans</name>
    <dbReference type="NCBI Taxonomy" id="6239"/>
    <lineage>
        <taxon>Eukaryota</taxon>
        <taxon>Metazoa</taxon>
        <taxon>Ecdysozoa</taxon>
        <taxon>Nematoda</taxon>
        <taxon>Chromadorea</taxon>
        <taxon>Rhabditida</taxon>
        <taxon>Rhabditina</taxon>
        <taxon>Rhabditomorpha</taxon>
        <taxon>Rhabditoidea</taxon>
        <taxon>Rhabditidae</taxon>
        <taxon>Peloderinae</taxon>
        <taxon>Caenorhabditis</taxon>
    </lineage>
</organism>
<evidence type="ECO:0000255" key="1">
    <source>
        <dbReference type="PROSITE-ProRule" id="PRU00155"/>
    </source>
</evidence>
<evidence type="ECO:0000255" key="2">
    <source>
        <dbReference type="PROSITE-ProRule" id="PRU00190"/>
    </source>
</evidence>
<evidence type="ECO:0000256" key="3">
    <source>
        <dbReference type="SAM" id="MobiDB-lite"/>
    </source>
</evidence>
<evidence type="ECO:0000269" key="4">
    <source>
    </source>
</evidence>
<evidence type="ECO:0000269" key="5">
    <source>
    </source>
</evidence>
<evidence type="ECO:0000269" key="6">
    <source>
    </source>
</evidence>
<evidence type="ECO:0000269" key="7">
    <source>
    </source>
</evidence>
<evidence type="ECO:0000269" key="8">
    <source>
    </source>
</evidence>
<evidence type="ECO:0000312" key="9">
    <source>
        <dbReference type="WormBase" id="Y2H9A.1"/>
    </source>
</evidence>
<accession>Q9NH52</accession>
<accession>Q9XXS4</accession>